<feature type="chain" id="PRO_0000023977" description="Protein pacG">
    <location>
        <begin position="1"/>
        <end position="566"/>
    </location>
</feature>
<feature type="DNA-binding region" description="NDT80" evidence="2">
    <location>
        <begin position="79"/>
        <end position="326"/>
    </location>
</feature>
<feature type="region of interest" description="Disordered" evidence="3">
    <location>
        <begin position="314"/>
        <end position="422"/>
    </location>
</feature>
<feature type="region of interest" description="Disordered" evidence="3">
    <location>
        <begin position="448"/>
        <end position="470"/>
    </location>
</feature>
<feature type="compositionally biased region" description="Low complexity" evidence="3">
    <location>
        <begin position="333"/>
        <end position="349"/>
    </location>
</feature>
<feature type="compositionally biased region" description="Polar residues" evidence="3">
    <location>
        <begin position="365"/>
        <end position="391"/>
    </location>
</feature>
<feature type="compositionally biased region" description="Polar residues" evidence="3">
    <location>
        <begin position="403"/>
        <end position="413"/>
    </location>
</feature>
<feature type="compositionally biased region" description="Polar residues" evidence="3">
    <location>
        <begin position="452"/>
        <end position="466"/>
    </location>
</feature>
<feature type="sequence conflict" description="In Ref. 3; AAA33289." evidence="4" ref="3">
    <original>G</original>
    <variation>R</variation>
    <location>
        <position position="376"/>
    </location>
</feature>
<feature type="sequence conflict" description="In Ref. 3; AAA33289." evidence="4" ref="3">
    <original>R</original>
    <variation>L</variation>
    <location>
        <position position="423"/>
    </location>
</feature>
<feature type="sequence conflict" description="In Ref. 3; AAA33289." evidence="4" ref="3">
    <original>G</original>
    <variation>C</variation>
    <location>
        <position position="447"/>
    </location>
</feature>
<feature type="sequence conflict" description="In Ref. 3; AAA33289." evidence="4" ref="3">
    <original>P</original>
    <variation>S</variation>
    <location>
        <position position="451"/>
    </location>
</feature>
<feature type="sequence conflict" description="In Ref. 3; AAA33289." evidence="4" ref="3">
    <original>AS</original>
    <variation>VV</variation>
    <location>
        <begin position="460"/>
        <end position="461"/>
    </location>
</feature>
<reference key="1">
    <citation type="journal article" date="2005" name="Nature">
        <title>Sequencing of Aspergillus nidulans and comparative analysis with A. fumigatus and A. oryzae.</title>
        <authorList>
            <person name="Galagan J.E."/>
            <person name="Calvo S.E."/>
            <person name="Cuomo C."/>
            <person name="Ma L.-J."/>
            <person name="Wortman J.R."/>
            <person name="Batzoglou S."/>
            <person name="Lee S.-I."/>
            <person name="Bastuerkmen M."/>
            <person name="Spevak C.C."/>
            <person name="Clutterbuck J."/>
            <person name="Kapitonov V."/>
            <person name="Jurka J."/>
            <person name="Scazzocchio C."/>
            <person name="Farman M.L."/>
            <person name="Butler J."/>
            <person name="Purcell S."/>
            <person name="Harris S."/>
            <person name="Braus G.H."/>
            <person name="Draht O."/>
            <person name="Busch S."/>
            <person name="D'Enfert C."/>
            <person name="Bouchier C."/>
            <person name="Goldman G.H."/>
            <person name="Bell-Pedersen D."/>
            <person name="Griffiths-Jones S."/>
            <person name="Doonan J.H."/>
            <person name="Yu J."/>
            <person name="Vienken K."/>
            <person name="Pain A."/>
            <person name="Freitag M."/>
            <person name="Selker E.U."/>
            <person name="Archer D.B."/>
            <person name="Penalva M.A."/>
            <person name="Oakley B.R."/>
            <person name="Momany M."/>
            <person name="Tanaka T."/>
            <person name="Kumagai T."/>
            <person name="Asai K."/>
            <person name="Machida M."/>
            <person name="Nierman W.C."/>
            <person name="Denning D.W."/>
            <person name="Caddick M.X."/>
            <person name="Hynes M."/>
            <person name="Paoletti M."/>
            <person name="Fischer R."/>
            <person name="Miller B.L."/>
            <person name="Dyer P.S."/>
            <person name="Sachs M.S."/>
            <person name="Osmani S.A."/>
            <person name="Birren B.W."/>
        </authorList>
    </citation>
    <scope>NUCLEOTIDE SEQUENCE [LARGE SCALE GENOMIC DNA]</scope>
    <source>
        <strain>FGSC A4 / ATCC 38163 / CBS 112.46 / NRRL 194 / M139</strain>
    </source>
</reference>
<reference key="2">
    <citation type="journal article" date="2009" name="Fungal Genet. Biol.">
        <title>The 2008 update of the Aspergillus nidulans genome annotation: a community effort.</title>
        <authorList>
            <person name="Wortman J.R."/>
            <person name="Gilsenan J.M."/>
            <person name="Joardar V."/>
            <person name="Deegan J."/>
            <person name="Clutterbuck J."/>
            <person name="Andersen M.R."/>
            <person name="Archer D."/>
            <person name="Bencina M."/>
            <person name="Braus G."/>
            <person name="Coutinho P."/>
            <person name="von Dohren H."/>
            <person name="Doonan J."/>
            <person name="Driessen A.J."/>
            <person name="Durek P."/>
            <person name="Espeso E."/>
            <person name="Fekete E."/>
            <person name="Flipphi M."/>
            <person name="Estrada C.G."/>
            <person name="Geysens S."/>
            <person name="Goldman G."/>
            <person name="de Groot P.W."/>
            <person name="Hansen K."/>
            <person name="Harris S.D."/>
            <person name="Heinekamp T."/>
            <person name="Helmstaedt K."/>
            <person name="Henrissat B."/>
            <person name="Hofmann G."/>
            <person name="Homan T."/>
            <person name="Horio T."/>
            <person name="Horiuchi H."/>
            <person name="James S."/>
            <person name="Jones M."/>
            <person name="Karaffa L."/>
            <person name="Karanyi Z."/>
            <person name="Kato M."/>
            <person name="Keller N."/>
            <person name="Kelly D.E."/>
            <person name="Kiel J.A."/>
            <person name="Kim J.M."/>
            <person name="van der Klei I.J."/>
            <person name="Klis F.M."/>
            <person name="Kovalchuk A."/>
            <person name="Krasevec N."/>
            <person name="Kubicek C.P."/>
            <person name="Liu B."/>
            <person name="Maccabe A."/>
            <person name="Meyer V."/>
            <person name="Mirabito P."/>
            <person name="Miskei M."/>
            <person name="Mos M."/>
            <person name="Mullins J."/>
            <person name="Nelson D.R."/>
            <person name="Nielsen J."/>
            <person name="Oakley B.R."/>
            <person name="Osmani S.A."/>
            <person name="Pakula T."/>
            <person name="Paszewski A."/>
            <person name="Paulsen I."/>
            <person name="Pilsyk S."/>
            <person name="Pocsi I."/>
            <person name="Punt P.J."/>
            <person name="Ram A.F."/>
            <person name="Ren Q."/>
            <person name="Robellet X."/>
            <person name="Robson G."/>
            <person name="Seiboth B."/>
            <person name="van Solingen P."/>
            <person name="Specht T."/>
            <person name="Sun J."/>
            <person name="Taheri-Talesh N."/>
            <person name="Takeshita N."/>
            <person name="Ussery D."/>
            <person name="vanKuyk P.A."/>
            <person name="Visser H."/>
            <person name="van de Vondervoort P.J."/>
            <person name="de Vries R.P."/>
            <person name="Walton J."/>
            <person name="Xiang X."/>
            <person name="Xiong Y."/>
            <person name="Zeng A.P."/>
            <person name="Brandt B.W."/>
            <person name="Cornell M.J."/>
            <person name="van den Hondel C.A."/>
            <person name="Visser J."/>
            <person name="Oliver S.G."/>
            <person name="Turner G."/>
        </authorList>
    </citation>
    <scope>GENOME REANNOTATION</scope>
    <source>
        <strain>FGSC A4 / ATCC 38163 / CBS 112.46 / NRRL 194 / M139</strain>
    </source>
</reference>
<reference key="3">
    <citation type="journal article" date="1993" name="Gene">
        <title>Characterization of an Aspergillus nidulans genomic DNA fragment conferring phosphate-non-repressible acid-phosphatase activity.</title>
        <authorList>
            <person name="Macrae W.D."/>
            <person name="Buxton F.P."/>
            <person name="Sibley S."/>
            <person name="Garven S."/>
            <person name="Gwynne D.I."/>
            <person name="Arst H.N. Jr."/>
            <person name="Davies R.W."/>
        </authorList>
    </citation>
    <scope>NUCLEOTIDE SEQUENCE [GENOMIC DNA] OF 132-461</scope>
    <source>
        <strain>FGSC A4 / ATCC 38163 / CBS 112.46 / NRRL 194 / M139</strain>
    </source>
</reference>
<sequence length="566" mass="61871">MEGFDTMALPYLASPLSLGNMQGTDYLNALQGMDLPDQRSNFDSETFVSGDDLTFAHLSPQTLKRFSSGYEDSFPEMVTSFDPPPPAEPPADSSIDHNNKLLSFSMPVYPWTLLDYSFRRASISISAQLHGMFFLAESPWTTSPTENAPPQQGAELTCYRRNLFQITGSVTLPRALRYIITDTGDRIPIVAHELTVSATESVEGNSVKIISVPWKTPAANDAGKDTGNSSNTAAKVEKEPPAIPLDMLTGQDLDADYATFPIAWKRLQFRVATANNGRRKELQQHFVVRLRVVATLSTGMKTPICEVHSGPVIVRGRSPRNFQSRKDLPLSGSAAASRKNAQAAAASNNLTRTSPSLTDKAKTVVKSSSPETSSNGVPQQSPPNWALATNSTLPPPTTTTLPHSSVYSQSSPEFSRPVEAHRRTTSAIAAPINLSLLDDDSLNLSNGDSRPHTSFSNDLASKSLSVDSGRPVKMRKVSHSMPQAQSRSTSATFLNTANFQQMLPVPFTSESADVLYEYFPLGLEDWQGPVDAVYRPHVVHHTNMPQMKYITARGQSKRYFAAEDVF</sequence>
<accession>Q05534</accession>
<accession>C8VM27</accession>
<accession>Q5BDG6</accession>
<organism>
    <name type="scientific">Emericella nidulans (strain FGSC A4 / ATCC 38163 / CBS 112.46 / NRRL 194 / M139)</name>
    <name type="common">Aspergillus nidulans</name>
    <dbReference type="NCBI Taxonomy" id="227321"/>
    <lineage>
        <taxon>Eukaryota</taxon>
        <taxon>Fungi</taxon>
        <taxon>Dikarya</taxon>
        <taxon>Ascomycota</taxon>
        <taxon>Pezizomycotina</taxon>
        <taxon>Eurotiomycetes</taxon>
        <taxon>Eurotiomycetidae</taxon>
        <taxon>Eurotiales</taxon>
        <taxon>Aspergillaceae</taxon>
        <taxon>Aspergillus</taxon>
        <taxon>Aspergillus subgen. Nidulantes</taxon>
    </lineage>
</organism>
<comment type="function">
    <text evidence="1">Transcription factor that acts as a positive regulator of nonrepressible acid phosphatase activity. Is a major regulator of responses to nitrogen and carbon starvation and is essential for the expression of genes involved in vegetative incompatibility (like pin-c, het-6, and tol). Vegetative incompatibility is a non-self-recognition system ubiquitous in filamentous fungi which results in programmed cell death (By similarity).</text>
</comment>
<comment type="subcellular location">
    <subcellularLocation>
        <location>Nucleus</location>
    </subcellularLocation>
    <subcellularLocation>
        <location evidence="1">Cytoplasm</location>
    </subcellularLocation>
</comment>
<comment type="caution">
    <text evidence="5">Was originally thought to be a phosphatase.</text>
</comment>
<comment type="sequence caution" evidence="4">
    <conflict type="erroneous gene model prediction">
        <sequence resource="EMBL-CDS" id="CBF84810"/>
    </conflict>
</comment>
<comment type="sequence caution" evidence="4">
    <conflict type="erroneous gene model prediction">
        <sequence resource="EMBL-CDS" id="EAA64544"/>
    </conflict>
</comment>
<gene>
    <name type="primary">pacG</name>
    <name type="ORF">AN1414</name>
</gene>
<name>PHOG_EMENI</name>
<keyword id="KW-0963">Cytoplasm</keyword>
<keyword id="KW-0238">DNA-binding</keyword>
<keyword id="KW-0539">Nucleus</keyword>
<keyword id="KW-1185">Reference proteome</keyword>
<keyword id="KW-0804">Transcription</keyword>
<keyword id="KW-0805">Transcription regulation</keyword>
<protein>
    <recommendedName>
        <fullName>Protein pacG</fullName>
    </recommendedName>
    <alternativeName>
        <fullName>Nonrepressible acid phosphatase regulator pacG</fullName>
    </alternativeName>
</protein>
<evidence type="ECO:0000250" key="1"/>
<evidence type="ECO:0000255" key="2">
    <source>
        <dbReference type="PROSITE-ProRule" id="PRU00850"/>
    </source>
</evidence>
<evidence type="ECO:0000256" key="3">
    <source>
        <dbReference type="SAM" id="MobiDB-lite"/>
    </source>
</evidence>
<evidence type="ECO:0000305" key="4"/>
<evidence type="ECO:0000305" key="5">
    <source>
    </source>
</evidence>
<proteinExistence type="inferred from homology"/>
<dbReference type="EMBL" id="AACD01000022">
    <property type="protein sequence ID" value="EAA64544.1"/>
    <property type="status" value="ALT_SEQ"/>
    <property type="molecule type" value="Genomic_DNA"/>
</dbReference>
<dbReference type="EMBL" id="BN001307">
    <property type="protein sequence ID" value="CBF84810.1"/>
    <property type="status" value="ALT_SEQ"/>
    <property type="molecule type" value="Genomic_DNA"/>
</dbReference>
<dbReference type="EMBL" id="M96993">
    <property type="protein sequence ID" value="AAA33289.1"/>
    <property type="molecule type" value="Genomic_DNA"/>
</dbReference>
<dbReference type="PIR" id="JN0783">
    <property type="entry name" value="JN0783"/>
</dbReference>
<dbReference type="RefSeq" id="XP_659018.1">
    <property type="nucleotide sequence ID" value="XM_653926.1"/>
</dbReference>
<dbReference type="eggNOG" id="ENOG502SAHY">
    <property type="taxonomic scope" value="Eukaryota"/>
</dbReference>
<dbReference type="HOGENOM" id="CLU_789952_0_0_1"/>
<dbReference type="InParanoid" id="Q05534"/>
<dbReference type="Proteomes" id="UP000000560">
    <property type="component" value="Chromosome VII"/>
</dbReference>
<dbReference type="GO" id="GO:0005737">
    <property type="term" value="C:cytoplasm"/>
    <property type="evidence" value="ECO:0007669"/>
    <property type="project" value="UniProtKB-SubCell"/>
</dbReference>
<dbReference type="GO" id="GO:0000228">
    <property type="term" value="C:nuclear chromosome"/>
    <property type="evidence" value="ECO:0000318"/>
    <property type="project" value="GO_Central"/>
</dbReference>
<dbReference type="GO" id="GO:0003677">
    <property type="term" value="F:DNA binding"/>
    <property type="evidence" value="ECO:0007669"/>
    <property type="project" value="UniProtKB-KW"/>
</dbReference>
<dbReference type="GO" id="GO:0003700">
    <property type="term" value="F:DNA-binding transcription factor activity"/>
    <property type="evidence" value="ECO:0000318"/>
    <property type="project" value="GO_Central"/>
</dbReference>
<dbReference type="GO" id="GO:0051321">
    <property type="term" value="P:meiotic cell cycle"/>
    <property type="evidence" value="ECO:0000318"/>
    <property type="project" value="GO_Central"/>
</dbReference>
<dbReference type="GO" id="GO:0045944">
    <property type="term" value="P:positive regulation of transcription by RNA polymerase II"/>
    <property type="evidence" value="ECO:0000318"/>
    <property type="project" value="GO_Central"/>
</dbReference>
<dbReference type="FunFam" id="2.60.40.1390:FF:000002">
    <property type="entry name" value="PhoG like DNA-binding family protein"/>
    <property type="match status" value="1"/>
</dbReference>
<dbReference type="Gene3D" id="2.60.40.1390">
    <property type="entry name" value="NDT80 DNA-binding domain"/>
    <property type="match status" value="1"/>
</dbReference>
<dbReference type="InterPro" id="IPR052605">
    <property type="entry name" value="Fungal_trans_regulator"/>
</dbReference>
<dbReference type="InterPro" id="IPR024061">
    <property type="entry name" value="NDT80_DNA-bd_dom"/>
</dbReference>
<dbReference type="InterPro" id="IPR037141">
    <property type="entry name" value="NDT80_DNA-bd_dom_sf"/>
</dbReference>
<dbReference type="InterPro" id="IPR008967">
    <property type="entry name" value="p53-like_TF_DNA-bd_sf"/>
</dbReference>
<dbReference type="PANTHER" id="PTHR35144">
    <property type="entry name" value="MEIOSIS-SPECIFIC TRANSCRIPTION FACTOR NDT80"/>
    <property type="match status" value="1"/>
</dbReference>
<dbReference type="PANTHER" id="PTHR35144:SF1">
    <property type="entry name" value="PROTEIN PACG"/>
    <property type="match status" value="1"/>
</dbReference>
<dbReference type="Pfam" id="PF05224">
    <property type="entry name" value="NDT80_PhoG"/>
    <property type="match status" value="1"/>
</dbReference>
<dbReference type="SUPFAM" id="SSF49417">
    <property type="entry name" value="p53-like transcription factors"/>
    <property type="match status" value="1"/>
</dbReference>
<dbReference type="PROSITE" id="PS51517">
    <property type="entry name" value="NDT80"/>
    <property type="match status" value="1"/>
</dbReference>